<reference key="1">
    <citation type="journal article" date="2009" name="Nature">
        <title>Evolution of pathogenicity and sexual reproduction in eight Candida genomes.</title>
        <authorList>
            <person name="Butler G."/>
            <person name="Rasmussen M.D."/>
            <person name="Lin M.F."/>
            <person name="Santos M.A.S."/>
            <person name="Sakthikumar S."/>
            <person name="Munro C.A."/>
            <person name="Rheinbay E."/>
            <person name="Grabherr M."/>
            <person name="Forche A."/>
            <person name="Reedy J.L."/>
            <person name="Agrafioti I."/>
            <person name="Arnaud M.B."/>
            <person name="Bates S."/>
            <person name="Brown A.J.P."/>
            <person name="Brunke S."/>
            <person name="Costanzo M.C."/>
            <person name="Fitzpatrick D.A."/>
            <person name="de Groot P.W.J."/>
            <person name="Harris D."/>
            <person name="Hoyer L.L."/>
            <person name="Hube B."/>
            <person name="Klis F.M."/>
            <person name="Kodira C."/>
            <person name="Lennard N."/>
            <person name="Logue M.E."/>
            <person name="Martin R."/>
            <person name="Neiman A.M."/>
            <person name="Nikolaou E."/>
            <person name="Quail M.A."/>
            <person name="Quinn J."/>
            <person name="Santos M.C."/>
            <person name="Schmitzberger F.F."/>
            <person name="Sherlock G."/>
            <person name="Shah P."/>
            <person name="Silverstein K.A.T."/>
            <person name="Skrzypek M.S."/>
            <person name="Soll D."/>
            <person name="Staggs R."/>
            <person name="Stansfield I."/>
            <person name="Stumpf M.P.H."/>
            <person name="Sudbery P.E."/>
            <person name="Srikantha T."/>
            <person name="Zeng Q."/>
            <person name="Berman J."/>
            <person name="Berriman M."/>
            <person name="Heitman J."/>
            <person name="Gow N.A.R."/>
            <person name="Lorenz M.C."/>
            <person name="Birren B.W."/>
            <person name="Kellis M."/>
            <person name="Cuomo C.A."/>
        </authorList>
    </citation>
    <scope>NUCLEOTIDE SEQUENCE [LARGE SCALE GENOMIC DNA]</scope>
    <source>
        <strain>WO-1</strain>
    </source>
</reference>
<evidence type="ECO:0000250" key="1"/>
<evidence type="ECO:0000255" key="2"/>
<evidence type="ECO:0000256" key="3">
    <source>
        <dbReference type="SAM" id="MobiDB-lite"/>
    </source>
</evidence>
<evidence type="ECO:0000305" key="4"/>
<organism>
    <name type="scientific">Candida albicans (strain WO-1)</name>
    <name type="common">Yeast</name>
    <dbReference type="NCBI Taxonomy" id="294748"/>
    <lineage>
        <taxon>Eukaryota</taxon>
        <taxon>Fungi</taxon>
        <taxon>Dikarya</taxon>
        <taxon>Ascomycota</taxon>
        <taxon>Saccharomycotina</taxon>
        <taxon>Pichiomycetes</taxon>
        <taxon>Debaryomycetaceae</taxon>
        <taxon>Candida/Lodderomyces clade</taxon>
        <taxon>Candida</taxon>
    </lineage>
</organism>
<accession>P0CH79</accession>
<accession>C4YKR5</accession>
<accession>Q59XS6</accession>
<sequence length="239" mass="25950">MKLSTIFTAFAATIATVAGYETTGSKQTVDILIDYIIKETPELSQNDVANWENGDTVTLQYVVNNNEESEITVVGVTGQFKNPINNEIVTNLTTGKVGPIAVPPGEAIKFDQKINVDLIPANYELIPHVFIAQDSLIKVIPCRGQLATIVDAAVSFFDPRLIFLELVLLITFAGLIYVGYEIWGKQYFKGVAPVKAKKVSAAKASSPVASGPSTTSATGYDTNWIPESHLKQKKTKKVN</sequence>
<proteinExistence type="inferred from homology"/>
<name>IR222_CANAW</name>
<protein>
    <recommendedName>
        <fullName>Increased recombination centers protein 22-2</fullName>
    </recommendedName>
</protein>
<comment type="function">
    <text>Is probably involved in a pathway contributing to genomic integrity.</text>
</comment>
<comment type="subcellular location">
    <subcellularLocation>
        <location evidence="1">Endoplasmic reticulum membrane</location>
        <topology evidence="1">Single-pass type I membrane protein</topology>
    </subcellularLocation>
</comment>
<comment type="similarity">
    <text evidence="4">Belongs to the IRC22 family.</text>
</comment>
<feature type="signal peptide" evidence="2">
    <location>
        <begin position="1"/>
        <end position="19"/>
    </location>
</feature>
<feature type="chain" id="PRO_0000399073" description="Increased recombination centers protein 22-2">
    <location>
        <begin position="20"/>
        <end position="239"/>
    </location>
</feature>
<feature type="topological domain" description="Lumenal" evidence="2">
    <location>
        <begin position="20"/>
        <end position="161"/>
    </location>
</feature>
<feature type="transmembrane region" description="Helical" evidence="2">
    <location>
        <begin position="162"/>
        <end position="182"/>
    </location>
</feature>
<feature type="topological domain" description="Cytoplasmic" evidence="2">
    <location>
        <begin position="183"/>
        <end position="239"/>
    </location>
</feature>
<feature type="region of interest" description="Disordered" evidence="3">
    <location>
        <begin position="201"/>
        <end position="222"/>
    </location>
</feature>
<feature type="compositionally biased region" description="Low complexity" evidence="3">
    <location>
        <begin position="201"/>
        <end position="213"/>
    </location>
</feature>
<dbReference type="EMBL" id="CH672354">
    <property type="protein sequence ID" value="EEQ47494.1"/>
    <property type="molecule type" value="Genomic_DNA"/>
</dbReference>
<dbReference type="PaxDb" id="5476-P0CH79"/>
<dbReference type="VEuPathDB" id="FungiDB:CAWG_06072"/>
<dbReference type="HOGENOM" id="CLU_078554_0_0_1"/>
<dbReference type="OMA" id="DKSEWLP"/>
<dbReference type="OrthoDB" id="11865at766764"/>
<dbReference type="Proteomes" id="UP000001429">
    <property type="component" value="Chromosome 2, Supercontig 1.9"/>
</dbReference>
<dbReference type="GO" id="GO:0005789">
    <property type="term" value="C:endoplasmic reticulum membrane"/>
    <property type="evidence" value="ECO:0007669"/>
    <property type="project" value="UniProtKB-SubCell"/>
</dbReference>
<dbReference type="InterPro" id="IPR005595">
    <property type="entry name" value="TRAP_alpha"/>
</dbReference>
<dbReference type="PANTHER" id="PTHR12924:SF0">
    <property type="entry name" value="TRANSLOCON-ASSOCIATED PROTEIN SUBUNIT ALPHA"/>
    <property type="match status" value="1"/>
</dbReference>
<dbReference type="PANTHER" id="PTHR12924">
    <property type="entry name" value="TRANSLOCON-ASSOCIATED PROTEIN, ALPHA SUBUNIT"/>
    <property type="match status" value="1"/>
</dbReference>
<dbReference type="Pfam" id="PF03896">
    <property type="entry name" value="TRAP_alpha"/>
    <property type="match status" value="1"/>
</dbReference>
<gene>
    <name type="primary">IRC22-2</name>
    <name type="ORF">CAWG_06072</name>
</gene>
<keyword id="KW-0256">Endoplasmic reticulum</keyword>
<keyword id="KW-0472">Membrane</keyword>
<keyword id="KW-0732">Signal</keyword>
<keyword id="KW-0812">Transmembrane</keyword>
<keyword id="KW-1133">Transmembrane helix</keyword>